<evidence type="ECO:0000255" key="1"/>
<evidence type="ECO:0000256" key="2">
    <source>
        <dbReference type="SAM" id="MobiDB-lite"/>
    </source>
</evidence>
<evidence type="ECO:0000305" key="3"/>
<organism>
    <name type="scientific">Gallid herpesvirus 2 (strain GA)</name>
    <name type="common">GaHV-2</name>
    <name type="synonym">Marek's disease herpesvirus type 1</name>
    <dbReference type="NCBI Taxonomy" id="10388"/>
    <lineage>
        <taxon>Viruses</taxon>
        <taxon>Duplodnaviria</taxon>
        <taxon>Heunggongvirae</taxon>
        <taxon>Peploviricota</taxon>
        <taxon>Herviviricetes</taxon>
        <taxon>Herpesvirales</taxon>
        <taxon>Orthoherpesviridae</taxon>
        <taxon>Alphaherpesvirinae</taxon>
        <taxon>Mardivirus</taxon>
        <taxon>Mardivirus gallidalpha2</taxon>
        <taxon>Gallid alphaherpesvirus 2</taxon>
    </lineage>
</organism>
<organismHost>
    <name type="scientific">Gallus gallus</name>
    <name type="common">Chicken</name>
    <dbReference type="NCBI Taxonomy" id="9031"/>
</organismHost>
<accession>P10681</accession>
<dbReference type="EMBL" id="M20001">
    <property type="protein sequence ID" value="AAA46114.1"/>
    <property type="molecule type" value="Genomic_DNA"/>
</dbReference>
<dbReference type="GlyCosmos" id="P10681">
    <property type="glycosylation" value="8 sites, No reported glycans"/>
</dbReference>
<dbReference type="GO" id="GO:0005576">
    <property type="term" value="C:extracellular region"/>
    <property type="evidence" value="ECO:0007669"/>
    <property type="project" value="UniProtKB-SubCell"/>
</dbReference>
<dbReference type="GO" id="GO:0020002">
    <property type="term" value="C:host cell plasma membrane"/>
    <property type="evidence" value="ECO:0007669"/>
    <property type="project" value="UniProtKB-SubCell"/>
</dbReference>
<dbReference type="GO" id="GO:0016020">
    <property type="term" value="C:membrane"/>
    <property type="evidence" value="ECO:0007669"/>
    <property type="project" value="UniProtKB-KW"/>
</dbReference>
<dbReference type="InterPro" id="IPR001038">
    <property type="entry name" value="GA_GC"/>
</dbReference>
<dbReference type="InterPro" id="IPR007110">
    <property type="entry name" value="Ig-like_dom"/>
</dbReference>
<dbReference type="InterPro" id="IPR036179">
    <property type="entry name" value="Ig-like_dom_sf"/>
</dbReference>
<dbReference type="InterPro" id="IPR001654">
    <property type="entry name" value="Marek_A"/>
</dbReference>
<dbReference type="Pfam" id="PF02124">
    <property type="entry name" value="Marek_A"/>
    <property type="match status" value="1"/>
</dbReference>
<dbReference type="PRINTS" id="PR00675">
    <property type="entry name" value="MAREKSGPA"/>
</dbReference>
<dbReference type="SUPFAM" id="SSF48726">
    <property type="entry name" value="Immunoglobulin"/>
    <property type="match status" value="1"/>
</dbReference>
<dbReference type="PROSITE" id="PS50835">
    <property type="entry name" value="IG_LIKE"/>
    <property type="match status" value="1"/>
</dbReference>
<gene>
    <name type="primary">gC</name>
    <name type="ORF">GA</name>
</gene>
<comment type="function">
    <text>May play an immunoevasive role in the pathogenesis of Marek's disease. It is a candidate for causing the early-stage immunosuppression that occurs after MDHV infection.</text>
</comment>
<comment type="subcellular location">
    <subcellularLocation>
        <location>Secreted</location>
    </subcellularLocation>
    <subcellularLocation>
        <location>Host cell membrane</location>
        <topology>Single-pass membrane protein</topology>
    </subcellularLocation>
    <text>Predominantly secreted. Secreted, but a small amount of mature GP57-65 is anchored in the plasma membrane or held by other interactions.</text>
</comment>
<comment type="similarity">
    <text evidence="3">Belongs to the herpesviridae glycoprotein C family.</text>
</comment>
<reference key="1">
    <citation type="journal article" date="1988" name="J. Virol.">
        <title>Structure and complete nucleotide sequence of the Marek's disease herpesvirus gp57-65 gene.</title>
        <authorList>
            <person name="Coussens P.M."/>
            <person name="Velicer L.F."/>
        </authorList>
    </citation>
    <scope>NUCLEOTIDE SEQUENCE [GENOMIC DNA]</scope>
</reference>
<proteinExistence type="inferred from homology"/>
<feature type="signal peptide" evidence="1">
    <location>
        <begin position="1"/>
        <end position="27"/>
    </location>
</feature>
<feature type="chain" id="PRO_0000038208" description="Envelope glycoprotein C homolog">
    <location>
        <begin position="28"/>
        <end position="505"/>
    </location>
</feature>
<feature type="topological domain" description="Virion surface" evidence="1">
    <location>
        <begin position="28"/>
        <end position="464"/>
    </location>
</feature>
<feature type="transmembrane region" description="Helical" evidence="1">
    <location>
        <begin position="465"/>
        <end position="491"/>
    </location>
</feature>
<feature type="topological domain" description="Cytoplasmic" evidence="1">
    <location>
        <begin position="492"/>
        <end position="505"/>
    </location>
</feature>
<feature type="domain" description="Ig-like">
    <location>
        <begin position="257"/>
        <end position="355"/>
    </location>
</feature>
<feature type="region of interest" description="Disordered" evidence="2">
    <location>
        <begin position="51"/>
        <end position="85"/>
    </location>
</feature>
<feature type="compositionally biased region" description="Low complexity" evidence="2">
    <location>
        <begin position="61"/>
        <end position="71"/>
    </location>
</feature>
<feature type="glycosylation site" description="N-linked (GlcNAc...) asparagine; by host" evidence="1">
    <location>
        <position position="45"/>
    </location>
</feature>
<feature type="glycosylation site" description="N-linked (GlcNAc...) asparagine; by host" evidence="1">
    <location>
        <position position="90"/>
    </location>
</feature>
<feature type="glycosylation site" description="N-linked (GlcNAc...) asparagine; by host" evidence="1">
    <location>
        <position position="99"/>
    </location>
</feature>
<feature type="glycosylation site" description="N-linked (GlcNAc...) asparagine; by host" evidence="1">
    <location>
        <position position="119"/>
    </location>
</feature>
<feature type="glycosylation site" description="N-linked (GlcNAc...) asparagine; by host" evidence="1">
    <location>
        <position position="211"/>
    </location>
</feature>
<feature type="glycosylation site" description="N-linked (GlcNAc...) asparagine; by host" evidence="1">
    <location>
        <position position="353"/>
    </location>
</feature>
<feature type="glycosylation site" description="N-linked (GlcNAc...) asparagine; by host" evidence="1">
    <location>
        <position position="399"/>
    </location>
</feature>
<feature type="glycosylation site" description="N-linked (GlcNAc...) asparagine; by host" evidence="1">
    <location>
        <position position="428"/>
    </location>
</feature>
<keyword id="KW-0325">Glycoprotein</keyword>
<keyword id="KW-1032">Host cell membrane</keyword>
<keyword id="KW-1043">Host membrane</keyword>
<keyword id="KW-0945">Host-virus interaction</keyword>
<keyword id="KW-0393">Immunoglobulin domain</keyword>
<keyword id="KW-0472">Membrane</keyword>
<keyword id="KW-0964">Secreted</keyword>
<keyword id="KW-0732">Signal</keyword>
<keyword id="KW-0812">Transmembrane</keyword>
<keyword id="KW-1133">Transmembrane helix</keyword>
<sequence length="505" mass="56809">MLTPRVLRALGWTGLFFLLLSPSNVLGASLSRDLEHPILSFDPSNISINGAPLTEVPHAPSTESVSTNSESTNEHTITETTGKNAYIHNNASTDKQNANDTHKTPNILCDTEEVFVFLNETGRFVCTLKVDPPSDSEWSNFVLDLIFNPIEYHANEKNVEAARIAGLYGVPGSDYAYPRQSELISSIRRDPQGTFWTSPSPHGNKYFIWINKTTNTMGVEIRNVDYADNGYMQVIMRDHFNRPLIDKHIYIRVCQRPASVDVLAPPVLSGENYKASCIVRHFYPPGSVYVSWRQNGNIATPRKDRDGSFWWFESGRGATLVSTITLGNSGIDFPPKISCLVAWKQGDMISTTNATAIPTVYHHPRLSLAFKDGYAICTIECVPSEITVRWLVHDEAQPNTTYNTVVTGLCRTIDRHRNLLSRIPVWDNWTKTKYTCRLIGYPFDEDKFQDSEYYDATPSARGTPMVITVNGSFGIGCNFRVGDNHDCPMFIHSTRKIFDYNLIVM</sequence>
<protein>
    <recommendedName>
        <fullName>Envelope glycoprotein C homolog</fullName>
    </recommendedName>
    <alternativeName>
        <fullName>A antigen</fullName>
    </alternativeName>
    <alternativeName>
        <fullName>Glycoprotein A</fullName>
        <shortName>GA</shortName>
    </alternativeName>
    <alternativeName>
        <fullName>Secretory glycoprotein GP57-65</fullName>
    </alternativeName>
</protein>
<name>GC_GAHVG</name>